<comment type="function">
    <text evidence="1">Participates actively in the response to hyperosmotic and heat shock by preventing the aggregation of stress-denatured proteins, in association with DnaK and GrpE. It is the nucleotide exchange factor for DnaK and may function as a thermosensor. Unfolded proteins bind initially to DnaJ; upon interaction with the DnaJ-bound protein, DnaK hydrolyzes its bound ATP, resulting in the formation of a stable complex. GrpE releases ADP from DnaK; ATP binding to DnaK triggers the release of the substrate protein, thus completing the reaction cycle. Several rounds of ATP-dependent interactions between DnaJ, DnaK and GrpE are required for fully efficient folding.</text>
</comment>
<comment type="subunit">
    <text evidence="1">Homodimer.</text>
</comment>
<comment type="subcellular location">
    <subcellularLocation>
        <location evidence="1">Cytoplasm</location>
    </subcellularLocation>
</comment>
<comment type="similarity">
    <text evidence="1">Belongs to the GrpE family.</text>
</comment>
<proteinExistence type="inferred from homology"/>
<gene>
    <name evidence="1" type="primary">grpE</name>
    <name type="ordered locus">SNSL254_A2895</name>
</gene>
<accession>B4T2B9</accession>
<sequence length="196" mass="21841">MSSKEQKTPEGQAPEEIIMDQHEEVEAVEPNDSAEQVDPRDEKIANLEVQLAEAQTRERDTVLRIKAEMENLRRRTEQDIEKAHKFALEKFVNELLPVIDSLDRALEVADKANPDMAAMVEGIELTLKSMLDVVRKFGVEVIAETNVPLDPNVHQAIAMVESEEVPAGNVLGIMQKGYTLNGRTIRAAMVTVAKAK</sequence>
<dbReference type="EMBL" id="CP001113">
    <property type="protein sequence ID" value="ACF64703.1"/>
    <property type="molecule type" value="Genomic_DNA"/>
</dbReference>
<dbReference type="RefSeq" id="WP_001518875.1">
    <property type="nucleotide sequence ID" value="NZ_CCMR01000001.1"/>
</dbReference>
<dbReference type="SMR" id="B4T2B9"/>
<dbReference type="KEGG" id="see:SNSL254_A2895"/>
<dbReference type="HOGENOM" id="CLU_057217_6_0_6"/>
<dbReference type="Proteomes" id="UP000008824">
    <property type="component" value="Chromosome"/>
</dbReference>
<dbReference type="GO" id="GO:0005829">
    <property type="term" value="C:cytosol"/>
    <property type="evidence" value="ECO:0007669"/>
    <property type="project" value="TreeGrafter"/>
</dbReference>
<dbReference type="GO" id="GO:0000774">
    <property type="term" value="F:adenyl-nucleotide exchange factor activity"/>
    <property type="evidence" value="ECO:0007669"/>
    <property type="project" value="InterPro"/>
</dbReference>
<dbReference type="GO" id="GO:0042803">
    <property type="term" value="F:protein homodimerization activity"/>
    <property type="evidence" value="ECO:0007669"/>
    <property type="project" value="InterPro"/>
</dbReference>
<dbReference type="GO" id="GO:0051087">
    <property type="term" value="F:protein-folding chaperone binding"/>
    <property type="evidence" value="ECO:0007669"/>
    <property type="project" value="InterPro"/>
</dbReference>
<dbReference type="GO" id="GO:0051082">
    <property type="term" value="F:unfolded protein binding"/>
    <property type="evidence" value="ECO:0007669"/>
    <property type="project" value="TreeGrafter"/>
</dbReference>
<dbReference type="GO" id="GO:0006457">
    <property type="term" value="P:protein folding"/>
    <property type="evidence" value="ECO:0007669"/>
    <property type="project" value="InterPro"/>
</dbReference>
<dbReference type="CDD" id="cd00446">
    <property type="entry name" value="GrpE"/>
    <property type="match status" value="1"/>
</dbReference>
<dbReference type="FunFam" id="2.30.22.10:FF:000001">
    <property type="entry name" value="Protein GrpE"/>
    <property type="match status" value="1"/>
</dbReference>
<dbReference type="FunFam" id="3.90.20.20:FF:000001">
    <property type="entry name" value="Protein GrpE"/>
    <property type="match status" value="1"/>
</dbReference>
<dbReference type="Gene3D" id="3.90.20.20">
    <property type="match status" value="1"/>
</dbReference>
<dbReference type="Gene3D" id="2.30.22.10">
    <property type="entry name" value="Head domain of nucleotide exchange factor GrpE"/>
    <property type="match status" value="1"/>
</dbReference>
<dbReference type="HAMAP" id="MF_01151">
    <property type="entry name" value="GrpE"/>
    <property type="match status" value="1"/>
</dbReference>
<dbReference type="InterPro" id="IPR000740">
    <property type="entry name" value="GrpE"/>
</dbReference>
<dbReference type="InterPro" id="IPR013805">
    <property type="entry name" value="GrpE_coiled_coil"/>
</dbReference>
<dbReference type="InterPro" id="IPR009012">
    <property type="entry name" value="GrpE_head"/>
</dbReference>
<dbReference type="NCBIfam" id="NF007655">
    <property type="entry name" value="PRK10325.1"/>
    <property type="match status" value="1"/>
</dbReference>
<dbReference type="NCBIfam" id="NF010738">
    <property type="entry name" value="PRK14140.1"/>
    <property type="match status" value="1"/>
</dbReference>
<dbReference type="NCBIfam" id="NF010748">
    <property type="entry name" value="PRK14150.1"/>
    <property type="match status" value="1"/>
</dbReference>
<dbReference type="PANTHER" id="PTHR21237">
    <property type="entry name" value="GRPE PROTEIN"/>
    <property type="match status" value="1"/>
</dbReference>
<dbReference type="PANTHER" id="PTHR21237:SF23">
    <property type="entry name" value="GRPE PROTEIN HOMOLOG, MITOCHONDRIAL"/>
    <property type="match status" value="1"/>
</dbReference>
<dbReference type="Pfam" id="PF01025">
    <property type="entry name" value="GrpE"/>
    <property type="match status" value="1"/>
</dbReference>
<dbReference type="PRINTS" id="PR00773">
    <property type="entry name" value="GRPEPROTEIN"/>
</dbReference>
<dbReference type="SUPFAM" id="SSF58014">
    <property type="entry name" value="Coiled-coil domain of nucleotide exchange factor GrpE"/>
    <property type="match status" value="1"/>
</dbReference>
<dbReference type="SUPFAM" id="SSF51064">
    <property type="entry name" value="Head domain of nucleotide exchange factor GrpE"/>
    <property type="match status" value="1"/>
</dbReference>
<dbReference type="PROSITE" id="PS01071">
    <property type="entry name" value="GRPE"/>
    <property type="match status" value="1"/>
</dbReference>
<keyword id="KW-0143">Chaperone</keyword>
<keyword id="KW-0963">Cytoplasm</keyword>
<keyword id="KW-0346">Stress response</keyword>
<reference key="1">
    <citation type="journal article" date="2011" name="J. Bacteriol.">
        <title>Comparative genomics of 28 Salmonella enterica isolates: evidence for CRISPR-mediated adaptive sublineage evolution.</title>
        <authorList>
            <person name="Fricke W.F."/>
            <person name="Mammel M.K."/>
            <person name="McDermott P.F."/>
            <person name="Tartera C."/>
            <person name="White D.G."/>
            <person name="Leclerc J.E."/>
            <person name="Ravel J."/>
            <person name="Cebula T.A."/>
        </authorList>
    </citation>
    <scope>NUCLEOTIDE SEQUENCE [LARGE SCALE GENOMIC DNA]</scope>
    <source>
        <strain>SL254</strain>
    </source>
</reference>
<feature type="chain" id="PRO_1000137612" description="Protein GrpE">
    <location>
        <begin position="1"/>
        <end position="196"/>
    </location>
</feature>
<feature type="region of interest" description="Disordered" evidence="2">
    <location>
        <begin position="1"/>
        <end position="40"/>
    </location>
</feature>
<protein>
    <recommendedName>
        <fullName evidence="1">Protein GrpE</fullName>
    </recommendedName>
    <alternativeName>
        <fullName evidence="1">HSP-70 cofactor</fullName>
    </alternativeName>
</protein>
<organism>
    <name type="scientific">Salmonella newport (strain SL254)</name>
    <dbReference type="NCBI Taxonomy" id="423368"/>
    <lineage>
        <taxon>Bacteria</taxon>
        <taxon>Pseudomonadati</taxon>
        <taxon>Pseudomonadota</taxon>
        <taxon>Gammaproteobacteria</taxon>
        <taxon>Enterobacterales</taxon>
        <taxon>Enterobacteriaceae</taxon>
        <taxon>Salmonella</taxon>
    </lineage>
</organism>
<evidence type="ECO:0000255" key="1">
    <source>
        <dbReference type="HAMAP-Rule" id="MF_01151"/>
    </source>
</evidence>
<evidence type="ECO:0000256" key="2">
    <source>
        <dbReference type="SAM" id="MobiDB-lite"/>
    </source>
</evidence>
<name>GRPE_SALNS</name>